<proteinExistence type="inferred from homology"/>
<comment type="function">
    <text evidence="1">Catalyzes the anti-1,4-elimination of the C-3 phosphate and the C-6 proR hydrogen from 5-enolpyruvylshikimate-3-phosphate (EPSP) to yield chorismate, which is the branch point compound that serves as the starting substrate for the three terminal pathways of aromatic amino acid biosynthesis. This reaction introduces a second double bond into the aromatic ring system.</text>
</comment>
<comment type="catalytic activity">
    <reaction evidence="1">
        <text>5-O-(1-carboxyvinyl)-3-phosphoshikimate = chorismate + phosphate</text>
        <dbReference type="Rhea" id="RHEA:21020"/>
        <dbReference type="ChEBI" id="CHEBI:29748"/>
        <dbReference type="ChEBI" id="CHEBI:43474"/>
        <dbReference type="ChEBI" id="CHEBI:57701"/>
        <dbReference type="EC" id="4.2.3.5"/>
    </reaction>
</comment>
<comment type="cofactor">
    <cofactor evidence="1">
        <name>FMNH2</name>
        <dbReference type="ChEBI" id="CHEBI:57618"/>
    </cofactor>
    <text evidence="1">Reduced FMN (FMNH(2)).</text>
</comment>
<comment type="pathway">
    <text evidence="1">Metabolic intermediate biosynthesis; chorismate biosynthesis; chorismate from D-erythrose 4-phosphate and phosphoenolpyruvate: step 7/7.</text>
</comment>
<comment type="subunit">
    <text evidence="1">Homotetramer.</text>
</comment>
<comment type="similarity">
    <text evidence="1">Belongs to the chorismate synthase family.</text>
</comment>
<accession>B8HNK4</accession>
<organism>
    <name type="scientific">Cyanothece sp. (strain PCC 7425 / ATCC 29141)</name>
    <dbReference type="NCBI Taxonomy" id="395961"/>
    <lineage>
        <taxon>Bacteria</taxon>
        <taxon>Bacillati</taxon>
        <taxon>Cyanobacteriota</taxon>
        <taxon>Cyanophyceae</taxon>
        <taxon>Gomontiellales</taxon>
        <taxon>Cyanothecaceae</taxon>
        <taxon>Cyanothece</taxon>
    </lineage>
</organism>
<dbReference type="EC" id="4.2.3.5" evidence="1"/>
<dbReference type="EMBL" id="CP001344">
    <property type="protein sequence ID" value="ACL43735.1"/>
    <property type="molecule type" value="Genomic_DNA"/>
</dbReference>
<dbReference type="SMR" id="B8HNK4"/>
<dbReference type="STRING" id="395961.Cyan7425_1361"/>
<dbReference type="KEGG" id="cyn:Cyan7425_1361"/>
<dbReference type="eggNOG" id="COG0082">
    <property type="taxonomic scope" value="Bacteria"/>
</dbReference>
<dbReference type="HOGENOM" id="CLU_034547_0_1_3"/>
<dbReference type="OrthoDB" id="9771806at2"/>
<dbReference type="UniPathway" id="UPA00053">
    <property type="reaction ID" value="UER00090"/>
</dbReference>
<dbReference type="GO" id="GO:0005829">
    <property type="term" value="C:cytosol"/>
    <property type="evidence" value="ECO:0007669"/>
    <property type="project" value="TreeGrafter"/>
</dbReference>
<dbReference type="GO" id="GO:0004107">
    <property type="term" value="F:chorismate synthase activity"/>
    <property type="evidence" value="ECO:0007669"/>
    <property type="project" value="UniProtKB-UniRule"/>
</dbReference>
<dbReference type="GO" id="GO:0010181">
    <property type="term" value="F:FMN binding"/>
    <property type="evidence" value="ECO:0007669"/>
    <property type="project" value="TreeGrafter"/>
</dbReference>
<dbReference type="GO" id="GO:0008652">
    <property type="term" value="P:amino acid biosynthetic process"/>
    <property type="evidence" value="ECO:0007669"/>
    <property type="project" value="UniProtKB-KW"/>
</dbReference>
<dbReference type="GO" id="GO:0009073">
    <property type="term" value="P:aromatic amino acid family biosynthetic process"/>
    <property type="evidence" value="ECO:0007669"/>
    <property type="project" value="UniProtKB-KW"/>
</dbReference>
<dbReference type="GO" id="GO:0009423">
    <property type="term" value="P:chorismate biosynthetic process"/>
    <property type="evidence" value="ECO:0007669"/>
    <property type="project" value="UniProtKB-UniRule"/>
</dbReference>
<dbReference type="CDD" id="cd07304">
    <property type="entry name" value="Chorismate_synthase"/>
    <property type="match status" value="1"/>
</dbReference>
<dbReference type="FunFam" id="3.60.150.10:FF:000003">
    <property type="entry name" value="Chorismate synthase"/>
    <property type="match status" value="1"/>
</dbReference>
<dbReference type="Gene3D" id="3.60.150.10">
    <property type="entry name" value="Chorismate synthase AroC"/>
    <property type="match status" value="1"/>
</dbReference>
<dbReference type="HAMAP" id="MF_00300">
    <property type="entry name" value="Chorismate_synth"/>
    <property type="match status" value="1"/>
</dbReference>
<dbReference type="InterPro" id="IPR000453">
    <property type="entry name" value="Chorismate_synth"/>
</dbReference>
<dbReference type="InterPro" id="IPR035904">
    <property type="entry name" value="Chorismate_synth_AroC_sf"/>
</dbReference>
<dbReference type="InterPro" id="IPR020541">
    <property type="entry name" value="Chorismate_synthase_CS"/>
</dbReference>
<dbReference type="NCBIfam" id="TIGR00033">
    <property type="entry name" value="aroC"/>
    <property type="match status" value="1"/>
</dbReference>
<dbReference type="NCBIfam" id="NF003793">
    <property type="entry name" value="PRK05382.1"/>
    <property type="match status" value="1"/>
</dbReference>
<dbReference type="PANTHER" id="PTHR21085">
    <property type="entry name" value="CHORISMATE SYNTHASE"/>
    <property type="match status" value="1"/>
</dbReference>
<dbReference type="PANTHER" id="PTHR21085:SF0">
    <property type="entry name" value="CHORISMATE SYNTHASE"/>
    <property type="match status" value="1"/>
</dbReference>
<dbReference type="Pfam" id="PF01264">
    <property type="entry name" value="Chorismate_synt"/>
    <property type="match status" value="1"/>
</dbReference>
<dbReference type="PIRSF" id="PIRSF001456">
    <property type="entry name" value="Chorismate_synth"/>
    <property type="match status" value="1"/>
</dbReference>
<dbReference type="SUPFAM" id="SSF103263">
    <property type="entry name" value="Chorismate synthase, AroC"/>
    <property type="match status" value="1"/>
</dbReference>
<dbReference type="PROSITE" id="PS00787">
    <property type="entry name" value="CHORISMATE_SYNTHASE_1"/>
    <property type="match status" value="1"/>
</dbReference>
<dbReference type="PROSITE" id="PS00788">
    <property type="entry name" value="CHORISMATE_SYNTHASE_2"/>
    <property type="match status" value="1"/>
</dbReference>
<dbReference type="PROSITE" id="PS00789">
    <property type="entry name" value="CHORISMATE_SYNTHASE_3"/>
    <property type="match status" value="1"/>
</dbReference>
<feature type="chain" id="PRO_1000132765" description="Chorismate synthase">
    <location>
        <begin position="1"/>
        <end position="362"/>
    </location>
</feature>
<feature type="binding site" evidence="1">
    <location>
        <position position="47"/>
    </location>
    <ligand>
        <name>NADP(+)</name>
        <dbReference type="ChEBI" id="CHEBI:58349"/>
    </ligand>
</feature>
<feature type="binding site" evidence="1">
    <location>
        <position position="53"/>
    </location>
    <ligand>
        <name>NADP(+)</name>
        <dbReference type="ChEBI" id="CHEBI:58349"/>
    </ligand>
</feature>
<feature type="binding site" evidence="1">
    <location>
        <begin position="124"/>
        <end position="126"/>
    </location>
    <ligand>
        <name>FMN</name>
        <dbReference type="ChEBI" id="CHEBI:58210"/>
    </ligand>
</feature>
<feature type="binding site" evidence="1">
    <location>
        <position position="285"/>
    </location>
    <ligand>
        <name>FMN</name>
        <dbReference type="ChEBI" id="CHEBI:58210"/>
    </ligand>
</feature>
<feature type="binding site" evidence="1">
    <location>
        <begin position="300"/>
        <end position="304"/>
    </location>
    <ligand>
        <name>FMN</name>
        <dbReference type="ChEBI" id="CHEBI:58210"/>
    </ligand>
</feature>
<feature type="binding site" evidence="1">
    <location>
        <position position="326"/>
    </location>
    <ligand>
        <name>FMN</name>
        <dbReference type="ChEBI" id="CHEBI:58210"/>
    </ligand>
</feature>
<keyword id="KW-0028">Amino-acid biosynthesis</keyword>
<keyword id="KW-0057">Aromatic amino acid biosynthesis</keyword>
<keyword id="KW-0274">FAD</keyword>
<keyword id="KW-0285">Flavoprotein</keyword>
<keyword id="KW-0288">FMN</keyword>
<keyword id="KW-0456">Lyase</keyword>
<keyword id="KW-0521">NADP</keyword>
<evidence type="ECO:0000255" key="1">
    <source>
        <dbReference type="HAMAP-Rule" id="MF_00300"/>
    </source>
</evidence>
<gene>
    <name evidence="1" type="primary">aroC</name>
    <name type="ordered locus">Cyan7425_1361</name>
</gene>
<name>AROC_CYAP4</name>
<sequence length="362" mass="39036">MGNTFGHLFRVTTFGESHGGGVGVVIDGCPPLLEISQAEIQAELDRRRPGQSRITTPRQETDTCEILSGVFEGKTLGTPIAILVRNKDTRPQDYQEMAQVYRPSHADATYDAKYGIRNWQGGGRSSARETIGRVAAGAIAKKILQQVAGVEIIAYVRRIKDLEAPIDPNTVTMEQVESNIVRCPHPDYAEKMIALIDQVRRDANSIGGVVECVARNVPKGLGSPVFDKLEADLAKGVMSLPATKGFEIGSGFAGTLLTGQEHNDEFYSENGDIRTVTNRSGGVQGGISNGENIIIRAAFKPTATIGQAQRTVNQAGESTILAAKGRHDPCVLPRAVPMVEAMVALVLCDHLLRDRAQCHLLT</sequence>
<reference key="1">
    <citation type="journal article" date="2011" name="MBio">
        <title>Novel metabolic attributes of the genus Cyanothece, comprising a group of unicellular nitrogen-fixing Cyanobacteria.</title>
        <authorList>
            <person name="Bandyopadhyay A."/>
            <person name="Elvitigala T."/>
            <person name="Welsh E."/>
            <person name="Stockel J."/>
            <person name="Liberton M."/>
            <person name="Min H."/>
            <person name="Sherman L.A."/>
            <person name="Pakrasi H.B."/>
        </authorList>
    </citation>
    <scope>NUCLEOTIDE SEQUENCE [LARGE SCALE GENOMIC DNA]</scope>
    <source>
        <strain>PCC 7425 / ATCC 29141</strain>
    </source>
</reference>
<protein>
    <recommendedName>
        <fullName evidence="1">Chorismate synthase</fullName>
        <shortName evidence="1">CS</shortName>
        <ecNumber evidence="1">4.2.3.5</ecNumber>
    </recommendedName>
    <alternativeName>
        <fullName evidence="1">5-enolpyruvylshikimate-3-phosphate phospholyase</fullName>
    </alternativeName>
</protein>